<feature type="chain" id="PRO_1000204966" description="Chorismate synthase">
    <location>
        <begin position="1"/>
        <end position="356"/>
    </location>
</feature>
<feature type="binding site" evidence="1">
    <location>
        <position position="44"/>
    </location>
    <ligand>
        <name>NADP(+)</name>
        <dbReference type="ChEBI" id="CHEBI:58349"/>
    </ligand>
</feature>
<feature type="binding site" evidence="1">
    <location>
        <position position="49"/>
    </location>
    <ligand>
        <name>NADP(+)</name>
        <dbReference type="ChEBI" id="CHEBI:58349"/>
    </ligand>
</feature>
<feature type="binding site" evidence="1">
    <location>
        <begin position="121"/>
        <end position="123"/>
    </location>
    <ligand>
        <name>FMN</name>
        <dbReference type="ChEBI" id="CHEBI:58210"/>
    </ligand>
</feature>
<feature type="binding site" evidence="1">
    <location>
        <position position="278"/>
    </location>
    <ligand>
        <name>FMN</name>
        <dbReference type="ChEBI" id="CHEBI:58210"/>
    </ligand>
</feature>
<feature type="binding site" evidence="1">
    <location>
        <begin position="293"/>
        <end position="297"/>
    </location>
    <ligand>
        <name>FMN</name>
        <dbReference type="ChEBI" id="CHEBI:58210"/>
    </ligand>
</feature>
<feature type="binding site" evidence="1">
    <location>
        <position position="320"/>
    </location>
    <ligand>
        <name>FMN</name>
        <dbReference type="ChEBI" id="CHEBI:58210"/>
    </ligand>
</feature>
<keyword id="KW-0028">Amino-acid biosynthesis</keyword>
<keyword id="KW-0057">Aromatic amino acid biosynthesis</keyword>
<keyword id="KW-0274">FAD</keyword>
<keyword id="KW-0285">Flavoprotein</keyword>
<keyword id="KW-0288">FMN</keyword>
<keyword id="KW-0456">Lyase</keyword>
<keyword id="KW-0521">NADP</keyword>
<keyword id="KW-1185">Reference proteome</keyword>
<proteinExistence type="inferred from homology"/>
<comment type="function">
    <text evidence="1">Catalyzes the anti-1,4-elimination of the C-3 phosphate and the C-6 proR hydrogen from 5-enolpyruvylshikimate-3-phosphate (EPSP) to yield chorismate, which is the branch point compound that serves as the starting substrate for the three terminal pathways of aromatic amino acid biosynthesis. This reaction introduces a second double bond into the aromatic ring system.</text>
</comment>
<comment type="catalytic activity">
    <reaction evidence="1">
        <text>5-O-(1-carboxyvinyl)-3-phosphoshikimate = chorismate + phosphate</text>
        <dbReference type="Rhea" id="RHEA:21020"/>
        <dbReference type="ChEBI" id="CHEBI:29748"/>
        <dbReference type="ChEBI" id="CHEBI:43474"/>
        <dbReference type="ChEBI" id="CHEBI:57701"/>
        <dbReference type="EC" id="4.2.3.5"/>
    </reaction>
</comment>
<comment type="cofactor">
    <cofactor evidence="1">
        <name>FMNH2</name>
        <dbReference type="ChEBI" id="CHEBI:57618"/>
    </cofactor>
    <text evidence="1">Reduced FMN (FMNH(2)).</text>
</comment>
<comment type="pathway">
    <text evidence="1">Metabolic intermediate biosynthesis; chorismate biosynthesis; chorismate from D-erythrose 4-phosphate and phosphoenolpyruvate: step 7/7.</text>
</comment>
<comment type="similarity">
    <text evidence="1">Belongs to the chorismate synthase family.</text>
</comment>
<name>AROC_THEGJ</name>
<organism>
    <name type="scientific">Thermococcus gammatolerans (strain DSM 15229 / JCM 11827 / EJ3)</name>
    <dbReference type="NCBI Taxonomy" id="593117"/>
    <lineage>
        <taxon>Archaea</taxon>
        <taxon>Methanobacteriati</taxon>
        <taxon>Methanobacteriota</taxon>
        <taxon>Thermococci</taxon>
        <taxon>Thermococcales</taxon>
        <taxon>Thermococcaceae</taxon>
        <taxon>Thermococcus</taxon>
    </lineage>
</organism>
<reference key="1">
    <citation type="journal article" date="2007" name="Genome Biol.">
        <title>Genome analysis and genome-wide proteomics of Thermococcus gammatolerans, the most radioresistant organism known amongst the Archaea.</title>
        <authorList>
            <person name="Zivanovic Y."/>
            <person name="Armengaud J."/>
            <person name="Lagorce A."/>
            <person name="Leplat C."/>
            <person name="Guerin P."/>
            <person name="Dutertre M."/>
            <person name="Anthouard V."/>
            <person name="Forterre P."/>
            <person name="Wincker P."/>
            <person name="Confalonieri F."/>
        </authorList>
    </citation>
    <scope>NUCLEOTIDE SEQUENCE [LARGE SCALE GENOMIC DNA]</scope>
    <source>
        <strain>DSM 15229 / JCM 11827 / EJ3</strain>
    </source>
</reference>
<dbReference type="EC" id="4.2.3.5" evidence="1"/>
<dbReference type="EMBL" id="CP001398">
    <property type="protein sequence ID" value="ACS34094.1"/>
    <property type="molecule type" value="Genomic_DNA"/>
</dbReference>
<dbReference type="RefSeq" id="WP_015859205.1">
    <property type="nucleotide sequence ID" value="NC_012804.1"/>
</dbReference>
<dbReference type="SMR" id="C5A782"/>
<dbReference type="STRING" id="593117.TGAM_1592"/>
<dbReference type="PaxDb" id="593117-TGAM_1592"/>
<dbReference type="GeneID" id="7988486"/>
<dbReference type="KEGG" id="tga:TGAM_1592"/>
<dbReference type="PATRIC" id="fig|593117.10.peg.1596"/>
<dbReference type="eggNOG" id="arCOG04133">
    <property type="taxonomic scope" value="Archaea"/>
</dbReference>
<dbReference type="HOGENOM" id="CLU_034547_0_0_2"/>
<dbReference type="OrthoDB" id="33049at2157"/>
<dbReference type="UniPathway" id="UPA00053">
    <property type="reaction ID" value="UER00090"/>
</dbReference>
<dbReference type="Proteomes" id="UP000001488">
    <property type="component" value="Chromosome"/>
</dbReference>
<dbReference type="GO" id="GO:0005829">
    <property type="term" value="C:cytosol"/>
    <property type="evidence" value="ECO:0007669"/>
    <property type="project" value="TreeGrafter"/>
</dbReference>
<dbReference type="GO" id="GO:0004107">
    <property type="term" value="F:chorismate synthase activity"/>
    <property type="evidence" value="ECO:0007669"/>
    <property type="project" value="UniProtKB-UniRule"/>
</dbReference>
<dbReference type="GO" id="GO:0010181">
    <property type="term" value="F:FMN binding"/>
    <property type="evidence" value="ECO:0007669"/>
    <property type="project" value="TreeGrafter"/>
</dbReference>
<dbReference type="GO" id="GO:0008652">
    <property type="term" value="P:amino acid biosynthetic process"/>
    <property type="evidence" value="ECO:0007669"/>
    <property type="project" value="UniProtKB-KW"/>
</dbReference>
<dbReference type="GO" id="GO:0009073">
    <property type="term" value="P:aromatic amino acid family biosynthetic process"/>
    <property type="evidence" value="ECO:0007669"/>
    <property type="project" value="UniProtKB-KW"/>
</dbReference>
<dbReference type="GO" id="GO:0009423">
    <property type="term" value="P:chorismate biosynthetic process"/>
    <property type="evidence" value="ECO:0007669"/>
    <property type="project" value="UniProtKB-UniRule"/>
</dbReference>
<dbReference type="CDD" id="cd07304">
    <property type="entry name" value="Chorismate_synthase"/>
    <property type="match status" value="1"/>
</dbReference>
<dbReference type="FunFam" id="3.60.150.10:FF:000002">
    <property type="entry name" value="Chorismate synthase"/>
    <property type="match status" value="1"/>
</dbReference>
<dbReference type="Gene3D" id="3.60.150.10">
    <property type="entry name" value="Chorismate synthase AroC"/>
    <property type="match status" value="1"/>
</dbReference>
<dbReference type="HAMAP" id="MF_00300">
    <property type="entry name" value="Chorismate_synth"/>
    <property type="match status" value="1"/>
</dbReference>
<dbReference type="InterPro" id="IPR000453">
    <property type="entry name" value="Chorismate_synth"/>
</dbReference>
<dbReference type="InterPro" id="IPR035904">
    <property type="entry name" value="Chorismate_synth_AroC_sf"/>
</dbReference>
<dbReference type="InterPro" id="IPR020541">
    <property type="entry name" value="Chorismate_synthase_CS"/>
</dbReference>
<dbReference type="NCBIfam" id="TIGR00033">
    <property type="entry name" value="aroC"/>
    <property type="match status" value="1"/>
</dbReference>
<dbReference type="NCBIfam" id="NF003793">
    <property type="entry name" value="PRK05382.1"/>
    <property type="match status" value="1"/>
</dbReference>
<dbReference type="PANTHER" id="PTHR21085">
    <property type="entry name" value="CHORISMATE SYNTHASE"/>
    <property type="match status" value="1"/>
</dbReference>
<dbReference type="PANTHER" id="PTHR21085:SF0">
    <property type="entry name" value="CHORISMATE SYNTHASE"/>
    <property type="match status" value="1"/>
</dbReference>
<dbReference type="Pfam" id="PF01264">
    <property type="entry name" value="Chorismate_synt"/>
    <property type="match status" value="1"/>
</dbReference>
<dbReference type="PIRSF" id="PIRSF001456">
    <property type="entry name" value="Chorismate_synth"/>
    <property type="match status" value="1"/>
</dbReference>
<dbReference type="SUPFAM" id="SSF103263">
    <property type="entry name" value="Chorismate synthase, AroC"/>
    <property type="match status" value="1"/>
</dbReference>
<dbReference type="PROSITE" id="PS00787">
    <property type="entry name" value="CHORISMATE_SYNTHASE_1"/>
    <property type="match status" value="1"/>
</dbReference>
<dbReference type="PROSITE" id="PS00788">
    <property type="entry name" value="CHORISMATE_SYNTHASE_2"/>
    <property type="match status" value="1"/>
</dbReference>
<dbReference type="PROSITE" id="PS00789">
    <property type="entry name" value="CHORISMATE_SYNTHASE_3"/>
    <property type="match status" value="1"/>
</dbReference>
<accession>C5A782</accession>
<gene>
    <name evidence="1" type="primary">aroC</name>
    <name type="ordered locus">TGAM_1592</name>
</gene>
<evidence type="ECO:0000255" key="1">
    <source>
        <dbReference type="HAMAP-Rule" id="MF_00300"/>
    </source>
</evidence>
<protein>
    <recommendedName>
        <fullName evidence="1">Chorismate synthase</fullName>
        <shortName evidence="1">CS</shortName>
        <ecNumber evidence="1">4.2.3.5</ecNumber>
    </recommendedName>
    <alternativeName>
        <fullName evidence="1">5-enolpyruvylshikimate-3-phosphate phospholyase</fullName>
    </alternativeName>
</protein>
<sequence length="356" mass="39373">MKGKLLSFTLFGESHGKAVGILIEGLPPGIEVKVEEMKAELERRKGIRRFSTKRRESDEPVIVSGVFNGFTTGTPVTVLVWNRDADSSYYEEIRNTPRPGHADYPAKVKFFGYNDYRGGGHFSGRLTVGVVIAGYFAKKLLERFGIRVRAYIRRIGPVECPQVEPEELFASPNPYCPDEDAFERMLEEMEKARKSGDSVGGTVEVVAINVPAGLGGPWDEDIEADLASALFRIPAVKGVEFGLGFRFAEMRGSEANDPFVVRNGRVATETNNHGGVLGGITTGMPLVARVAFKPTPSIYLPQRTVDLERMDEVELRLRGRFDSCIVPKALPVVEAMVAFVLADHLLRRKAWEGVVR</sequence>